<name>RPN2_EREGS</name>
<organism>
    <name type="scientific">Eremothecium gossypii (strain ATCC 10895 / CBS 109.51 / FGSC 9923 / NRRL Y-1056)</name>
    <name type="common">Yeast</name>
    <name type="synonym">Ashbya gossypii</name>
    <dbReference type="NCBI Taxonomy" id="284811"/>
    <lineage>
        <taxon>Eukaryota</taxon>
        <taxon>Fungi</taxon>
        <taxon>Dikarya</taxon>
        <taxon>Ascomycota</taxon>
        <taxon>Saccharomycotina</taxon>
        <taxon>Saccharomycetes</taxon>
        <taxon>Saccharomycetales</taxon>
        <taxon>Saccharomycetaceae</taxon>
        <taxon>Eremothecium</taxon>
    </lineage>
</organism>
<feature type="chain" id="PRO_0000173805" description="26S proteasome regulatory subunit RPN2">
    <location>
        <begin position="1"/>
        <end position="930"/>
    </location>
</feature>
<feature type="repeat" description="PC 1">
    <location>
        <begin position="358"/>
        <end position="391"/>
    </location>
</feature>
<feature type="repeat" description="PC 2">
    <location>
        <begin position="395"/>
        <end position="428"/>
    </location>
</feature>
<feature type="repeat" description="PC 3">
    <location>
        <begin position="437"/>
        <end position="471"/>
    </location>
</feature>
<feature type="repeat" description="PC 4">
    <location>
        <begin position="472"/>
        <end position="506"/>
    </location>
</feature>
<feature type="repeat" description="PC 5">
    <location>
        <begin position="508"/>
        <end position="541"/>
    </location>
</feature>
<feature type="repeat" description="PC 6">
    <location>
        <begin position="542"/>
        <end position="577"/>
    </location>
</feature>
<feature type="repeat" description="PC 7">
    <location>
        <begin position="578"/>
        <end position="610"/>
    </location>
</feature>
<feature type="repeat" description="PC 8">
    <location>
        <begin position="612"/>
        <end position="646"/>
    </location>
</feature>
<feature type="repeat" description="PC 9">
    <location>
        <begin position="647"/>
        <end position="684"/>
    </location>
</feature>
<feature type="repeat" description="PC 10">
    <location>
        <begin position="690"/>
        <end position="722"/>
    </location>
</feature>
<feature type="region of interest" description="Disordered" evidence="2">
    <location>
        <begin position="806"/>
        <end position="840"/>
    </location>
</feature>
<feature type="region of interest" description="Disordered" evidence="2">
    <location>
        <begin position="911"/>
        <end position="930"/>
    </location>
</feature>
<feature type="compositionally biased region" description="Basic and acidic residues" evidence="2">
    <location>
        <begin position="812"/>
        <end position="840"/>
    </location>
</feature>
<proteinExistence type="inferred from homology"/>
<keyword id="KW-0647">Proteasome</keyword>
<keyword id="KW-1185">Reference proteome</keyword>
<keyword id="KW-0677">Repeat</keyword>
<protein>
    <recommendedName>
        <fullName>26S proteasome regulatory subunit RPN2</fullName>
    </recommendedName>
</protein>
<evidence type="ECO:0000250" key="1"/>
<evidence type="ECO:0000256" key="2">
    <source>
        <dbReference type="SAM" id="MobiDB-lite"/>
    </source>
</evidence>
<evidence type="ECO:0000305" key="3"/>
<sequence>MSVITAAPLLALLREDDHTVKSYALHSINEVVDQLWSEVSNDITDIEALYEDSKFEDRKLAALVVSKIYYNLGEYESAVRYALAAEEYFDINEKSRYVETIVSQSIEMYIKLATENYGKEKSEIDLQLVSIFERMLNKCITAGEYKLALGIALESYRLDVVTNILTQQTSEPNMLKLITYVLIAATTTVSNTHFKINILYALFDILIRLKAPDYFAVSKIIVNLNDSKLAARLFDKLVSEKNTEIAYQIAFDLVTSASQGLLNELVATLSTGEGNDRLVEILSGLPTCDFYNTFLHANKRIDRSLLNKSKSSMDGKFSLFHTAVSVSNAFMHAGTTDDTFVRANLQWLGKAQNWAKFTATASLGIIHQGNLTGGKKIMEPYLPGSRASSRYIKGGSLYGLGLIYAGYGKEIIGYLKDQIVENSSNATDDDVDVLLHGASLGIGLAGMSSNSTEIFEALKEVLYADSANSGAAAALGIGLTMLGSGDETVAENLYTYAQETSHGEITKGLAIALALLNYGREELADETIKKMLEHENDSMRYGAVYTIALAYAGTSSNEAVKKLLHVAVSDSNDDVRRASVTALGFVLIRDYTTVPRIVELLSESHNPHVRCGTAFALGVACAGRGLQAAIDVLEPLTNDPVDFVRQAAMIALSMILIQQTEKTNVKVRDVNEQLRNVIANKHQEGLAKFGACVAQGIINAGGRNVTIQLENSEMGTLNTKSVIGLAMFTQFWYWFPLAHFLSLSFTPTTTIGVRSHDLKIPKFSFHCHTKEGIFDYPPMFEEDIDKSIEKVATAVLSTTAKAKARAKKSKKDKAVEPDKSKEEIKVENEQRDKKEHDADVPEEEFKIKYTSTYYKVENMTRVVPQQLKYIAFPKDERFTPVRKFKGSNGVIVLSDKTPDEPVEVIKTVRQEKETDAPLPAPFKVQDDLEF</sequence>
<accession>Q75CF3</accession>
<reference key="1">
    <citation type="journal article" date="2004" name="Science">
        <title>The Ashbya gossypii genome as a tool for mapping the ancient Saccharomyces cerevisiae genome.</title>
        <authorList>
            <person name="Dietrich F.S."/>
            <person name="Voegeli S."/>
            <person name="Brachat S."/>
            <person name="Lerch A."/>
            <person name="Gates K."/>
            <person name="Steiner S."/>
            <person name="Mohr C."/>
            <person name="Poehlmann R."/>
            <person name="Luedi P."/>
            <person name="Choi S."/>
            <person name="Wing R.A."/>
            <person name="Flavier A."/>
            <person name="Gaffney T.D."/>
            <person name="Philippsen P."/>
        </authorList>
    </citation>
    <scope>NUCLEOTIDE SEQUENCE [LARGE SCALE GENOMIC DNA]</scope>
    <source>
        <strain>ATCC 10895 / CBS 109.51 / FGSC 9923 / NRRL Y-1056</strain>
    </source>
</reference>
<reference key="2">
    <citation type="journal article" date="2013" name="G3 (Bethesda)">
        <title>Genomes of Ashbya fungi isolated from insects reveal four mating-type loci, numerous translocations, lack of transposons, and distinct gene duplications.</title>
        <authorList>
            <person name="Dietrich F.S."/>
            <person name="Voegeli S."/>
            <person name="Kuo S."/>
            <person name="Philippsen P."/>
        </authorList>
    </citation>
    <scope>GENOME REANNOTATION</scope>
    <source>
        <strain>ATCC 10895 / CBS 109.51 / FGSC 9923 / NRRL Y-1056</strain>
    </source>
</reference>
<comment type="function">
    <text evidence="1">Acts as a regulatory subunit of the 26S proteasome which is involved in the ATP-dependent degradation of ubiquitinated proteins.</text>
</comment>
<comment type="similarity">
    <text evidence="3">Belongs to the proteasome subunit S1 family.</text>
</comment>
<dbReference type="EMBL" id="AE016816">
    <property type="protein sequence ID" value="AAS51195.1"/>
    <property type="molecule type" value="Genomic_DNA"/>
</dbReference>
<dbReference type="RefSeq" id="NP_983371.1">
    <property type="nucleotide sequence ID" value="NM_208724.1"/>
</dbReference>
<dbReference type="SMR" id="Q75CF3"/>
<dbReference type="FunCoup" id="Q75CF3">
    <property type="interactions" value="1515"/>
</dbReference>
<dbReference type="STRING" id="284811.Q75CF3"/>
<dbReference type="EnsemblFungi" id="AAS51195">
    <property type="protein sequence ID" value="AAS51195"/>
    <property type="gene ID" value="AGOS_ACL033C"/>
</dbReference>
<dbReference type="GeneID" id="4619496"/>
<dbReference type="KEGG" id="ago:AGOS_ACL033C"/>
<dbReference type="eggNOG" id="KOG2062">
    <property type="taxonomic scope" value="Eukaryota"/>
</dbReference>
<dbReference type="HOGENOM" id="CLU_002323_0_0_1"/>
<dbReference type="InParanoid" id="Q75CF3"/>
<dbReference type="OMA" id="IMFGRQE"/>
<dbReference type="OrthoDB" id="261572at2759"/>
<dbReference type="Proteomes" id="UP000000591">
    <property type="component" value="Chromosome III"/>
</dbReference>
<dbReference type="GO" id="GO:0005634">
    <property type="term" value="C:nucleus"/>
    <property type="evidence" value="ECO:0000318"/>
    <property type="project" value="GO_Central"/>
</dbReference>
<dbReference type="GO" id="GO:0008540">
    <property type="term" value="C:proteasome regulatory particle, base subcomplex"/>
    <property type="evidence" value="ECO:0000318"/>
    <property type="project" value="GO_Central"/>
</dbReference>
<dbReference type="GO" id="GO:0034515">
    <property type="term" value="C:proteasome storage granule"/>
    <property type="evidence" value="ECO:0000318"/>
    <property type="project" value="GO_Central"/>
</dbReference>
<dbReference type="GO" id="GO:0004175">
    <property type="term" value="F:endopeptidase activity"/>
    <property type="evidence" value="ECO:0007669"/>
    <property type="project" value="EnsemblFungi"/>
</dbReference>
<dbReference type="GO" id="GO:0030234">
    <property type="term" value="F:enzyme regulator activity"/>
    <property type="evidence" value="ECO:0007669"/>
    <property type="project" value="InterPro"/>
</dbReference>
<dbReference type="GO" id="GO:0031625">
    <property type="term" value="F:ubiquitin protein ligase binding"/>
    <property type="evidence" value="ECO:0007669"/>
    <property type="project" value="EnsemblFungi"/>
</dbReference>
<dbReference type="GO" id="GO:0043248">
    <property type="term" value="P:proteasome assembly"/>
    <property type="evidence" value="ECO:0007669"/>
    <property type="project" value="EnsemblFungi"/>
</dbReference>
<dbReference type="GO" id="GO:0043161">
    <property type="term" value="P:proteasome-mediated ubiquitin-dependent protein catabolic process"/>
    <property type="evidence" value="ECO:0000318"/>
    <property type="project" value="GO_Central"/>
</dbReference>
<dbReference type="GO" id="GO:0042176">
    <property type="term" value="P:regulation of protein catabolic process"/>
    <property type="evidence" value="ECO:0007669"/>
    <property type="project" value="InterPro"/>
</dbReference>
<dbReference type="FunFam" id="1.25.10.10:FF:000017">
    <property type="entry name" value="26S proteasome non-ATPase regulatory subunit 1"/>
    <property type="match status" value="1"/>
</dbReference>
<dbReference type="Gene3D" id="1.25.10.10">
    <property type="entry name" value="Leucine-rich Repeat Variant"/>
    <property type="match status" value="1"/>
</dbReference>
<dbReference type="InterPro" id="IPR016642">
    <property type="entry name" value="26S_Psome_Rpn2"/>
</dbReference>
<dbReference type="InterPro" id="IPR011989">
    <property type="entry name" value="ARM-like"/>
</dbReference>
<dbReference type="InterPro" id="IPR016024">
    <property type="entry name" value="ARM-type_fold"/>
</dbReference>
<dbReference type="InterPro" id="IPR002015">
    <property type="entry name" value="Proteasome/cyclosome_rpt"/>
</dbReference>
<dbReference type="InterPro" id="IPR048570">
    <property type="entry name" value="PSMD1_RPN2_N"/>
</dbReference>
<dbReference type="InterPro" id="IPR040623">
    <property type="entry name" value="RPN2_C"/>
</dbReference>
<dbReference type="PANTHER" id="PTHR10943">
    <property type="entry name" value="26S PROTEASOME NON-ATPASE REGULATORY SUBUNIT"/>
    <property type="match status" value="1"/>
</dbReference>
<dbReference type="PANTHER" id="PTHR10943:SF2">
    <property type="entry name" value="26S PROTEASOME NON-ATPASE REGULATORY SUBUNIT 1"/>
    <property type="match status" value="1"/>
</dbReference>
<dbReference type="Pfam" id="PF13646">
    <property type="entry name" value="HEAT_2"/>
    <property type="match status" value="1"/>
</dbReference>
<dbReference type="Pfam" id="PF01851">
    <property type="entry name" value="PC_rep"/>
    <property type="match status" value="4"/>
</dbReference>
<dbReference type="Pfam" id="PF18004">
    <property type="entry name" value="RPN2_C"/>
    <property type="match status" value="1"/>
</dbReference>
<dbReference type="Pfam" id="PF21505">
    <property type="entry name" value="RPN2_N"/>
    <property type="match status" value="1"/>
</dbReference>
<dbReference type="PIRSF" id="PIRSF015947">
    <property type="entry name" value="26S_Psome_Rpn2"/>
    <property type="match status" value="1"/>
</dbReference>
<dbReference type="SUPFAM" id="SSF48371">
    <property type="entry name" value="ARM repeat"/>
    <property type="match status" value="1"/>
</dbReference>
<gene>
    <name type="primary">RPN2</name>
    <name type="ordered locus">ACL033C</name>
</gene>